<evidence type="ECO:0000255" key="1">
    <source>
        <dbReference type="HAMAP-Rule" id="MF_00332"/>
    </source>
</evidence>
<evidence type="ECO:0000256" key="2">
    <source>
        <dbReference type="SAM" id="MobiDB-lite"/>
    </source>
</evidence>
<name>DNAK_CLOBK</name>
<keyword id="KW-0067">ATP-binding</keyword>
<keyword id="KW-0143">Chaperone</keyword>
<keyword id="KW-0547">Nucleotide-binding</keyword>
<keyword id="KW-0597">Phosphoprotein</keyword>
<keyword id="KW-0346">Stress response</keyword>
<sequence length="623" mass="66920">MAKIIGIDLGTTNSCVSVMEGGEPVVIPNAEGSRTTPSVVSFQANGERLIGQVAKRQAITNPEKTIISIKRYMGTDHKVNIDSTEYTPQQISAMVLQKLKADAEAYLGEKVTQAVITVPAYFNDSQRQATKDAGKIAGLEVLRIINEPTAASLAYGLDKMDTNEKILVYDLGGGTFDVSILELGDGVFEVKATNGDTKLGGDDFDQKLIDYIAETFKAENGIDLRNDKMAIQRLKEAAEKAKIELSSATQTNINLPFITADATGPKHIDMNLTRAKFNELTHDLVQRTLEPIKKSLEGSGYAMSDIDKIIMVGGSTRIPAVQDAVKDFTGKELSKGVNPDEVVAMGAAIQAGVLTGEVKDVLLLDVTPLTLGIETFGGVSTTLIEKNTTIPTRKSQVFSTAADGQTSVEIHVVQGERSMAADNKTLGRFTLSGIAPAPRGIPQIEVTFDIDANGIVNVSAKDKGTGKEANITITASTNLTDDEIEKAVNEAKKFEAEDKKRKESIEVKNNADQIVYQTEKTLTDLGDKVSAEDKAQIEEKVKAVKDVKEGEDLEAIKKATEDLTQTFYGISSKIYQQANPEGAQGAGFDPNNMGGANAGNASAENDKKDDNVVDADYKVEDDK</sequence>
<proteinExistence type="inferred from homology"/>
<reference key="1">
    <citation type="journal article" date="2007" name="PLoS ONE">
        <title>Analysis of the neurotoxin complex genes in Clostridium botulinum A1-A4 and B1 strains: BoNT/A3, /Ba4 and /B1 clusters are located within plasmids.</title>
        <authorList>
            <person name="Smith T.J."/>
            <person name="Hill K.K."/>
            <person name="Foley B.T."/>
            <person name="Detter J.C."/>
            <person name="Munk A.C."/>
            <person name="Bruce D.C."/>
            <person name="Doggett N.A."/>
            <person name="Smith L.A."/>
            <person name="Marks J.D."/>
            <person name="Xie G."/>
            <person name="Brettin T.S."/>
        </authorList>
    </citation>
    <scope>NUCLEOTIDE SEQUENCE [LARGE SCALE GENOMIC DNA]</scope>
    <source>
        <strain>Okra / Type B1</strain>
    </source>
</reference>
<gene>
    <name evidence="1" type="primary">dnaK</name>
    <name type="ordered locus">CLD_1586</name>
</gene>
<organism>
    <name type="scientific">Clostridium botulinum (strain Okra / Type B1)</name>
    <dbReference type="NCBI Taxonomy" id="498213"/>
    <lineage>
        <taxon>Bacteria</taxon>
        <taxon>Bacillati</taxon>
        <taxon>Bacillota</taxon>
        <taxon>Clostridia</taxon>
        <taxon>Eubacteriales</taxon>
        <taxon>Clostridiaceae</taxon>
        <taxon>Clostridium</taxon>
    </lineage>
</organism>
<protein>
    <recommendedName>
        <fullName evidence="1">Chaperone protein DnaK</fullName>
    </recommendedName>
    <alternativeName>
        <fullName evidence="1">HSP70</fullName>
    </alternativeName>
    <alternativeName>
        <fullName evidence="1">Heat shock 70 kDa protein</fullName>
    </alternativeName>
    <alternativeName>
        <fullName evidence="1">Heat shock protein 70</fullName>
    </alternativeName>
</protein>
<accession>B1ILM3</accession>
<dbReference type="EMBL" id="CP000939">
    <property type="protein sequence ID" value="ACA45121.1"/>
    <property type="molecule type" value="Genomic_DNA"/>
</dbReference>
<dbReference type="RefSeq" id="WP_015957791.1">
    <property type="nucleotide sequence ID" value="NC_010516.1"/>
</dbReference>
<dbReference type="SMR" id="B1ILM3"/>
<dbReference type="KEGG" id="cbb:CLD_1586"/>
<dbReference type="HOGENOM" id="CLU_005965_2_4_9"/>
<dbReference type="Proteomes" id="UP000008541">
    <property type="component" value="Chromosome"/>
</dbReference>
<dbReference type="GO" id="GO:0005524">
    <property type="term" value="F:ATP binding"/>
    <property type="evidence" value="ECO:0007669"/>
    <property type="project" value="UniProtKB-UniRule"/>
</dbReference>
<dbReference type="GO" id="GO:0140662">
    <property type="term" value="F:ATP-dependent protein folding chaperone"/>
    <property type="evidence" value="ECO:0007669"/>
    <property type="project" value="InterPro"/>
</dbReference>
<dbReference type="GO" id="GO:0051082">
    <property type="term" value="F:unfolded protein binding"/>
    <property type="evidence" value="ECO:0007669"/>
    <property type="project" value="InterPro"/>
</dbReference>
<dbReference type="CDD" id="cd10234">
    <property type="entry name" value="ASKHA_NBD_HSP70_DnaK-like"/>
    <property type="match status" value="1"/>
</dbReference>
<dbReference type="FunFam" id="2.60.34.10:FF:000014">
    <property type="entry name" value="Chaperone protein DnaK HSP70"/>
    <property type="match status" value="1"/>
</dbReference>
<dbReference type="FunFam" id="1.20.1270.10:FF:000001">
    <property type="entry name" value="Molecular chaperone DnaK"/>
    <property type="match status" value="1"/>
</dbReference>
<dbReference type="FunFam" id="3.30.420.40:FF:000071">
    <property type="entry name" value="Molecular chaperone DnaK"/>
    <property type="match status" value="1"/>
</dbReference>
<dbReference type="FunFam" id="3.90.640.10:FF:000003">
    <property type="entry name" value="Molecular chaperone DnaK"/>
    <property type="match status" value="1"/>
</dbReference>
<dbReference type="Gene3D" id="1.20.1270.10">
    <property type="match status" value="1"/>
</dbReference>
<dbReference type="Gene3D" id="3.30.420.40">
    <property type="match status" value="2"/>
</dbReference>
<dbReference type="Gene3D" id="3.90.640.10">
    <property type="entry name" value="Actin, Chain A, domain 4"/>
    <property type="match status" value="1"/>
</dbReference>
<dbReference type="Gene3D" id="2.60.34.10">
    <property type="entry name" value="Substrate Binding Domain Of DNAk, Chain A, domain 1"/>
    <property type="match status" value="1"/>
</dbReference>
<dbReference type="HAMAP" id="MF_00332">
    <property type="entry name" value="DnaK"/>
    <property type="match status" value="1"/>
</dbReference>
<dbReference type="InterPro" id="IPR043129">
    <property type="entry name" value="ATPase_NBD"/>
</dbReference>
<dbReference type="InterPro" id="IPR012725">
    <property type="entry name" value="Chaperone_DnaK"/>
</dbReference>
<dbReference type="InterPro" id="IPR018181">
    <property type="entry name" value="Heat_shock_70_CS"/>
</dbReference>
<dbReference type="InterPro" id="IPR029048">
    <property type="entry name" value="HSP70_C_sf"/>
</dbReference>
<dbReference type="InterPro" id="IPR029047">
    <property type="entry name" value="HSP70_peptide-bd_sf"/>
</dbReference>
<dbReference type="InterPro" id="IPR013126">
    <property type="entry name" value="Hsp_70_fam"/>
</dbReference>
<dbReference type="NCBIfam" id="NF001413">
    <property type="entry name" value="PRK00290.1"/>
    <property type="match status" value="1"/>
</dbReference>
<dbReference type="NCBIfam" id="TIGR02350">
    <property type="entry name" value="prok_dnaK"/>
    <property type="match status" value="1"/>
</dbReference>
<dbReference type="PANTHER" id="PTHR19375">
    <property type="entry name" value="HEAT SHOCK PROTEIN 70KDA"/>
    <property type="match status" value="1"/>
</dbReference>
<dbReference type="Pfam" id="PF00012">
    <property type="entry name" value="HSP70"/>
    <property type="match status" value="1"/>
</dbReference>
<dbReference type="PRINTS" id="PR00301">
    <property type="entry name" value="HEATSHOCK70"/>
</dbReference>
<dbReference type="SUPFAM" id="SSF53067">
    <property type="entry name" value="Actin-like ATPase domain"/>
    <property type="match status" value="2"/>
</dbReference>
<dbReference type="SUPFAM" id="SSF100934">
    <property type="entry name" value="Heat shock protein 70kD (HSP70), C-terminal subdomain"/>
    <property type="match status" value="1"/>
</dbReference>
<dbReference type="SUPFAM" id="SSF100920">
    <property type="entry name" value="Heat shock protein 70kD (HSP70), peptide-binding domain"/>
    <property type="match status" value="1"/>
</dbReference>
<dbReference type="PROSITE" id="PS00297">
    <property type="entry name" value="HSP70_1"/>
    <property type="match status" value="1"/>
</dbReference>
<dbReference type="PROSITE" id="PS00329">
    <property type="entry name" value="HSP70_2"/>
    <property type="match status" value="1"/>
</dbReference>
<dbReference type="PROSITE" id="PS01036">
    <property type="entry name" value="HSP70_3"/>
    <property type="match status" value="1"/>
</dbReference>
<comment type="function">
    <text evidence="1">Acts as a chaperone.</text>
</comment>
<comment type="induction">
    <text evidence="1">By stress conditions e.g. heat shock.</text>
</comment>
<comment type="similarity">
    <text evidence="1">Belongs to the heat shock protein 70 family.</text>
</comment>
<feature type="chain" id="PRO_1000119690" description="Chaperone protein DnaK">
    <location>
        <begin position="1"/>
        <end position="623"/>
    </location>
</feature>
<feature type="region of interest" description="Disordered" evidence="2">
    <location>
        <begin position="580"/>
        <end position="623"/>
    </location>
</feature>
<feature type="compositionally biased region" description="Low complexity" evidence="2">
    <location>
        <begin position="591"/>
        <end position="603"/>
    </location>
</feature>
<feature type="compositionally biased region" description="Basic and acidic residues" evidence="2">
    <location>
        <begin position="604"/>
        <end position="623"/>
    </location>
</feature>
<feature type="modified residue" description="Phosphothreonine; by autocatalysis" evidence="1">
    <location>
        <position position="175"/>
    </location>
</feature>